<feature type="chain" id="PRO_1000192259" description="Nucleoside diphosphate kinase">
    <location>
        <begin position="1"/>
        <end position="140"/>
    </location>
</feature>
<feature type="active site" description="Pros-phosphohistidine intermediate" evidence="1">
    <location>
        <position position="116"/>
    </location>
</feature>
<feature type="binding site" evidence="1">
    <location>
        <position position="10"/>
    </location>
    <ligand>
        <name>ATP</name>
        <dbReference type="ChEBI" id="CHEBI:30616"/>
    </ligand>
</feature>
<feature type="binding site" evidence="1">
    <location>
        <position position="58"/>
    </location>
    <ligand>
        <name>ATP</name>
        <dbReference type="ChEBI" id="CHEBI:30616"/>
    </ligand>
</feature>
<feature type="binding site" evidence="1">
    <location>
        <position position="86"/>
    </location>
    <ligand>
        <name>ATP</name>
        <dbReference type="ChEBI" id="CHEBI:30616"/>
    </ligand>
</feature>
<feature type="binding site" evidence="1">
    <location>
        <position position="92"/>
    </location>
    <ligand>
        <name>ATP</name>
        <dbReference type="ChEBI" id="CHEBI:30616"/>
    </ligand>
</feature>
<feature type="binding site" evidence="1">
    <location>
        <position position="103"/>
    </location>
    <ligand>
        <name>ATP</name>
        <dbReference type="ChEBI" id="CHEBI:30616"/>
    </ligand>
</feature>
<feature type="binding site" evidence="1">
    <location>
        <position position="113"/>
    </location>
    <ligand>
        <name>ATP</name>
        <dbReference type="ChEBI" id="CHEBI:30616"/>
    </ligand>
</feature>
<accession>A5UI22</accession>
<dbReference type="EC" id="2.7.4.6" evidence="1"/>
<dbReference type="EMBL" id="CP000672">
    <property type="protein sequence ID" value="ABR00428.1"/>
    <property type="molecule type" value="Genomic_DNA"/>
</dbReference>
<dbReference type="SMR" id="A5UI22"/>
<dbReference type="KEGG" id="hiq:CGSHiGG_07920"/>
<dbReference type="HOGENOM" id="CLU_060216_8_1_6"/>
<dbReference type="Proteomes" id="UP000001990">
    <property type="component" value="Chromosome"/>
</dbReference>
<dbReference type="GO" id="GO:0005737">
    <property type="term" value="C:cytoplasm"/>
    <property type="evidence" value="ECO:0007669"/>
    <property type="project" value="UniProtKB-SubCell"/>
</dbReference>
<dbReference type="GO" id="GO:0005524">
    <property type="term" value="F:ATP binding"/>
    <property type="evidence" value="ECO:0007669"/>
    <property type="project" value="UniProtKB-UniRule"/>
</dbReference>
<dbReference type="GO" id="GO:0046872">
    <property type="term" value="F:metal ion binding"/>
    <property type="evidence" value="ECO:0007669"/>
    <property type="project" value="UniProtKB-KW"/>
</dbReference>
<dbReference type="GO" id="GO:0004550">
    <property type="term" value="F:nucleoside diphosphate kinase activity"/>
    <property type="evidence" value="ECO:0007669"/>
    <property type="project" value="UniProtKB-UniRule"/>
</dbReference>
<dbReference type="GO" id="GO:0006241">
    <property type="term" value="P:CTP biosynthetic process"/>
    <property type="evidence" value="ECO:0007669"/>
    <property type="project" value="UniProtKB-UniRule"/>
</dbReference>
<dbReference type="GO" id="GO:0006183">
    <property type="term" value="P:GTP biosynthetic process"/>
    <property type="evidence" value="ECO:0007669"/>
    <property type="project" value="UniProtKB-UniRule"/>
</dbReference>
<dbReference type="GO" id="GO:0006228">
    <property type="term" value="P:UTP biosynthetic process"/>
    <property type="evidence" value="ECO:0007669"/>
    <property type="project" value="UniProtKB-UniRule"/>
</dbReference>
<dbReference type="CDD" id="cd04413">
    <property type="entry name" value="NDPk_I"/>
    <property type="match status" value="1"/>
</dbReference>
<dbReference type="FunFam" id="3.30.70.141:FF:000001">
    <property type="entry name" value="Nucleoside diphosphate kinase"/>
    <property type="match status" value="1"/>
</dbReference>
<dbReference type="Gene3D" id="3.30.70.141">
    <property type="entry name" value="Nucleoside diphosphate kinase-like domain"/>
    <property type="match status" value="1"/>
</dbReference>
<dbReference type="HAMAP" id="MF_00451">
    <property type="entry name" value="NDP_kinase"/>
    <property type="match status" value="1"/>
</dbReference>
<dbReference type="InterPro" id="IPR034907">
    <property type="entry name" value="NDK-like_dom"/>
</dbReference>
<dbReference type="InterPro" id="IPR036850">
    <property type="entry name" value="NDK-like_dom_sf"/>
</dbReference>
<dbReference type="InterPro" id="IPR001564">
    <property type="entry name" value="Nucleoside_diP_kinase"/>
</dbReference>
<dbReference type="InterPro" id="IPR023005">
    <property type="entry name" value="Nucleoside_diP_kinase_AS"/>
</dbReference>
<dbReference type="NCBIfam" id="NF001908">
    <property type="entry name" value="PRK00668.1"/>
    <property type="match status" value="1"/>
</dbReference>
<dbReference type="PANTHER" id="PTHR46161">
    <property type="entry name" value="NUCLEOSIDE DIPHOSPHATE KINASE"/>
    <property type="match status" value="1"/>
</dbReference>
<dbReference type="PANTHER" id="PTHR46161:SF3">
    <property type="entry name" value="NUCLEOSIDE DIPHOSPHATE KINASE DDB_G0292928-RELATED"/>
    <property type="match status" value="1"/>
</dbReference>
<dbReference type="Pfam" id="PF00334">
    <property type="entry name" value="NDK"/>
    <property type="match status" value="1"/>
</dbReference>
<dbReference type="PRINTS" id="PR01243">
    <property type="entry name" value="NUCDPKINASE"/>
</dbReference>
<dbReference type="SMART" id="SM00562">
    <property type="entry name" value="NDK"/>
    <property type="match status" value="1"/>
</dbReference>
<dbReference type="SUPFAM" id="SSF54919">
    <property type="entry name" value="Nucleoside diphosphate kinase, NDK"/>
    <property type="match status" value="1"/>
</dbReference>
<dbReference type="PROSITE" id="PS00469">
    <property type="entry name" value="NDPK"/>
    <property type="match status" value="1"/>
</dbReference>
<dbReference type="PROSITE" id="PS51374">
    <property type="entry name" value="NDPK_LIKE"/>
    <property type="match status" value="1"/>
</dbReference>
<evidence type="ECO:0000255" key="1">
    <source>
        <dbReference type="HAMAP-Rule" id="MF_00451"/>
    </source>
</evidence>
<reference key="1">
    <citation type="journal article" date="2007" name="Genome Biol.">
        <title>Characterization and modeling of the Haemophilus influenzae core and supragenomes based on the complete genomic sequences of Rd and 12 clinical nontypeable strains.</title>
        <authorList>
            <person name="Hogg J.S."/>
            <person name="Hu F.Z."/>
            <person name="Janto B."/>
            <person name="Boissy R."/>
            <person name="Hayes J."/>
            <person name="Keefe R."/>
            <person name="Post J.C."/>
            <person name="Ehrlich G.D."/>
        </authorList>
    </citation>
    <scope>NUCLEOTIDE SEQUENCE [LARGE SCALE GENOMIC DNA]</scope>
    <source>
        <strain>PittGG</strain>
    </source>
</reference>
<gene>
    <name evidence="1" type="primary">ndk</name>
    <name type="ordered locus">CGSHiGG_07920</name>
</gene>
<organism>
    <name type="scientific">Haemophilus influenzae (strain PittGG)</name>
    <dbReference type="NCBI Taxonomy" id="374931"/>
    <lineage>
        <taxon>Bacteria</taxon>
        <taxon>Pseudomonadati</taxon>
        <taxon>Pseudomonadota</taxon>
        <taxon>Gammaproteobacteria</taxon>
        <taxon>Pasteurellales</taxon>
        <taxon>Pasteurellaceae</taxon>
        <taxon>Haemophilus</taxon>
    </lineage>
</organism>
<protein>
    <recommendedName>
        <fullName evidence="1">Nucleoside diphosphate kinase</fullName>
        <shortName evidence="1">NDK</shortName>
        <shortName evidence="1">NDP kinase</shortName>
        <ecNumber evidence="1">2.7.4.6</ecNumber>
    </recommendedName>
    <alternativeName>
        <fullName evidence="1">Nucleoside-2-P kinase</fullName>
    </alternativeName>
</protein>
<name>NDK_HAEIG</name>
<proteinExistence type="inferred from homology"/>
<sequence length="140" mass="16021">MTERTFSIIKPDAVKRNLIGAILTRFEQNGFKIIASKMVRLTREQAEGFYAEHQGKEFFAPLVEYMMSSPIVVSVLEKENAVKDYRTLIGTTNPETAEEGTIRKDFALSQRENSVHGSDSIENANREIAYFFTDCEIFER</sequence>
<comment type="function">
    <text evidence="1">Major role in the synthesis of nucleoside triphosphates other than ATP. The ATP gamma phosphate is transferred to the NDP beta phosphate via a ping-pong mechanism, using a phosphorylated active-site intermediate.</text>
</comment>
<comment type="catalytic activity">
    <reaction evidence="1">
        <text>a 2'-deoxyribonucleoside 5'-diphosphate + ATP = a 2'-deoxyribonucleoside 5'-triphosphate + ADP</text>
        <dbReference type="Rhea" id="RHEA:44640"/>
        <dbReference type="ChEBI" id="CHEBI:30616"/>
        <dbReference type="ChEBI" id="CHEBI:61560"/>
        <dbReference type="ChEBI" id="CHEBI:73316"/>
        <dbReference type="ChEBI" id="CHEBI:456216"/>
        <dbReference type="EC" id="2.7.4.6"/>
    </reaction>
</comment>
<comment type="catalytic activity">
    <reaction evidence="1">
        <text>a ribonucleoside 5'-diphosphate + ATP = a ribonucleoside 5'-triphosphate + ADP</text>
        <dbReference type="Rhea" id="RHEA:18113"/>
        <dbReference type="ChEBI" id="CHEBI:30616"/>
        <dbReference type="ChEBI" id="CHEBI:57930"/>
        <dbReference type="ChEBI" id="CHEBI:61557"/>
        <dbReference type="ChEBI" id="CHEBI:456216"/>
        <dbReference type="EC" id="2.7.4.6"/>
    </reaction>
</comment>
<comment type="cofactor">
    <cofactor evidence="1">
        <name>Mg(2+)</name>
        <dbReference type="ChEBI" id="CHEBI:18420"/>
    </cofactor>
</comment>
<comment type="subunit">
    <text evidence="1">Homotetramer.</text>
</comment>
<comment type="subcellular location">
    <subcellularLocation>
        <location evidence="1">Cytoplasm</location>
    </subcellularLocation>
</comment>
<comment type="similarity">
    <text evidence="1">Belongs to the NDK family.</text>
</comment>
<keyword id="KW-0067">ATP-binding</keyword>
<keyword id="KW-0963">Cytoplasm</keyword>
<keyword id="KW-0418">Kinase</keyword>
<keyword id="KW-0460">Magnesium</keyword>
<keyword id="KW-0479">Metal-binding</keyword>
<keyword id="KW-0546">Nucleotide metabolism</keyword>
<keyword id="KW-0547">Nucleotide-binding</keyword>
<keyword id="KW-0597">Phosphoprotein</keyword>
<keyword id="KW-0808">Transferase</keyword>